<comment type="function">
    <text evidence="1">Catalyzes the phosphorylation of N-acetylmannosamine (ManNAc) to ManNAc-6-P.</text>
</comment>
<comment type="catalytic activity">
    <reaction evidence="1">
        <text>an N-acyl-D-mannosamine + ATP = an N-acyl-D-mannosamine 6-phosphate + ADP + H(+)</text>
        <dbReference type="Rhea" id="RHEA:23832"/>
        <dbReference type="ChEBI" id="CHEBI:15378"/>
        <dbReference type="ChEBI" id="CHEBI:16062"/>
        <dbReference type="ChEBI" id="CHEBI:30616"/>
        <dbReference type="ChEBI" id="CHEBI:57666"/>
        <dbReference type="ChEBI" id="CHEBI:456216"/>
        <dbReference type="EC" id="2.7.1.60"/>
    </reaction>
</comment>
<comment type="pathway">
    <text evidence="1">Amino-sugar metabolism; N-acetylneuraminate degradation; D-fructose 6-phosphate from N-acetylneuraminate: step 2/5.</text>
</comment>
<comment type="subunit">
    <text evidence="1">Homodimer.</text>
</comment>
<comment type="similarity">
    <text evidence="1">Belongs to the ROK (NagC/XylR) family. NanK subfamily.</text>
</comment>
<reference key="1">
    <citation type="journal article" date="2009" name="BMC Genomics">
        <title>Pseudogene accumulation in the evolutionary histories of Salmonella enterica serovars Paratyphi A and Typhi.</title>
        <authorList>
            <person name="Holt K.E."/>
            <person name="Thomson N.R."/>
            <person name="Wain J."/>
            <person name="Langridge G.C."/>
            <person name="Hasan R."/>
            <person name="Bhutta Z.A."/>
            <person name="Quail M.A."/>
            <person name="Norbertczak H."/>
            <person name="Walker D."/>
            <person name="Simmonds M."/>
            <person name="White B."/>
            <person name="Bason N."/>
            <person name="Mungall K."/>
            <person name="Dougan G."/>
            <person name="Parkhill J."/>
        </authorList>
    </citation>
    <scope>NUCLEOTIDE SEQUENCE [LARGE SCALE GENOMIC DNA]</scope>
    <source>
        <strain>AKU_12601</strain>
    </source>
</reference>
<keyword id="KW-0067">ATP-binding</keyword>
<keyword id="KW-0119">Carbohydrate metabolism</keyword>
<keyword id="KW-0418">Kinase</keyword>
<keyword id="KW-0479">Metal-binding</keyword>
<keyword id="KW-0547">Nucleotide-binding</keyword>
<keyword id="KW-0808">Transferase</keyword>
<keyword id="KW-0862">Zinc</keyword>
<proteinExistence type="inferred from homology"/>
<name>NANK_SALPK</name>
<gene>
    <name evidence="1" type="primary">nanK</name>
    <name type="ordered locus">SSPA2991</name>
</gene>
<feature type="chain" id="PRO_1000139694" description="N-acetylmannosamine kinase">
    <location>
        <begin position="1"/>
        <end position="291"/>
    </location>
</feature>
<feature type="binding site" evidence="1">
    <location>
        <begin position="5"/>
        <end position="12"/>
    </location>
    <ligand>
        <name>ATP</name>
        <dbReference type="ChEBI" id="CHEBI:30616"/>
    </ligand>
</feature>
<feature type="binding site" evidence="1">
    <location>
        <begin position="132"/>
        <end position="139"/>
    </location>
    <ligand>
        <name>ATP</name>
        <dbReference type="ChEBI" id="CHEBI:30616"/>
    </ligand>
</feature>
<feature type="binding site" evidence="1">
    <location>
        <position position="156"/>
    </location>
    <ligand>
        <name>Zn(2+)</name>
        <dbReference type="ChEBI" id="CHEBI:29105"/>
    </ligand>
</feature>
<feature type="binding site" evidence="1">
    <location>
        <position position="166"/>
    </location>
    <ligand>
        <name>Zn(2+)</name>
        <dbReference type="ChEBI" id="CHEBI:29105"/>
    </ligand>
</feature>
<feature type="binding site" evidence="1">
    <location>
        <position position="168"/>
    </location>
    <ligand>
        <name>Zn(2+)</name>
        <dbReference type="ChEBI" id="CHEBI:29105"/>
    </ligand>
</feature>
<feature type="binding site" evidence="1">
    <location>
        <position position="173"/>
    </location>
    <ligand>
        <name>Zn(2+)</name>
        <dbReference type="ChEBI" id="CHEBI:29105"/>
    </ligand>
</feature>
<evidence type="ECO:0000255" key="1">
    <source>
        <dbReference type="HAMAP-Rule" id="MF_01234"/>
    </source>
</evidence>
<sequence>MTTLAIDIGGTKLAAALIDNNLRISQRRELPTPASKTPDALREALKALVEPLRAEARQVAIASTGIIQEGMLLALNPHNLGGLLHFPLVQTLEAIAGLPTLAVNDAQAAAWAEYHALPDDIRDMVFITVSTGVGGGVVCDGKLLTGKGGLAGHLGHTLADPHGPVCGCGRVGCVEAIASGRGMAAAARDDLAGCDAKTLFIRAGEGHQQARHLVSQSAQVIARMIADVKATTDCQCVVIGGSVGLAEGYLEQVRAFLMQEPAPYHVALSAARYRHDAGLLGAALLAQGDTL</sequence>
<organism>
    <name type="scientific">Salmonella paratyphi A (strain AKU_12601)</name>
    <dbReference type="NCBI Taxonomy" id="554290"/>
    <lineage>
        <taxon>Bacteria</taxon>
        <taxon>Pseudomonadati</taxon>
        <taxon>Pseudomonadota</taxon>
        <taxon>Gammaproteobacteria</taxon>
        <taxon>Enterobacterales</taxon>
        <taxon>Enterobacteriaceae</taxon>
        <taxon>Salmonella</taxon>
    </lineage>
</organism>
<accession>B5BGP2</accession>
<dbReference type="EC" id="2.7.1.60" evidence="1"/>
<dbReference type="EMBL" id="FM200053">
    <property type="protein sequence ID" value="CAR61240.1"/>
    <property type="molecule type" value="Genomic_DNA"/>
</dbReference>
<dbReference type="RefSeq" id="WP_000208976.1">
    <property type="nucleotide sequence ID" value="NC_011147.1"/>
</dbReference>
<dbReference type="SMR" id="B5BGP2"/>
<dbReference type="KEGG" id="sek:SSPA2991"/>
<dbReference type="HOGENOM" id="CLU_036604_0_4_6"/>
<dbReference type="UniPathway" id="UPA00629">
    <property type="reaction ID" value="UER00681"/>
</dbReference>
<dbReference type="Proteomes" id="UP000001869">
    <property type="component" value="Chromosome"/>
</dbReference>
<dbReference type="GO" id="GO:0005524">
    <property type="term" value="F:ATP binding"/>
    <property type="evidence" value="ECO:0007669"/>
    <property type="project" value="UniProtKB-UniRule"/>
</dbReference>
<dbReference type="GO" id="GO:0009384">
    <property type="term" value="F:N-acylmannosamine kinase activity"/>
    <property type="evidence" value="ECO:0007669"/>
    <property type="project" value="UniProtKB-UniRule"/>
</dbReference>
<dbReference type="GO" id="GO:0008270">
    <property type="term" value="F:zinc ion binding"/>
    <property type="evidence" value="ECO:0007669"/>
    <property type="project" value="UniProtKB-UniRule"/>
</dbReference>
<dbReference type="GO" id="GO:0019262">
    <property type="term" value="P:N-acetylneuraminate catabolic process"/>
    <property type="evidence" value="ECO:0007669"/>
    <property type="project" value="UniProtKB-UniRule"/>
</dbReference>
<dbReference type="FunFam" id="3.30.420.40:FF:000062">
    <property type="entry name" value="N-acetylmannosamine kinase"/>
    <property type="match status" value="1"/>
</dbReference>
<dbReference type="FunFam" id="3.30.420.40:FF:000063">
    <property type="entry name" value="N-acetylmannosamine kinase"/>
    <property type="match status" value="1"/>
</dbReference>
<dbReference type="Gene3D" id="3.30.420.40">
    <property type="match status" value="2"/>
</dbReference>
<dbReference type="HAMAP" id="MF_01234">
    <property type="entry name" value="ManNAc_kinase"/>
    <property type="match status" value="1"/>
</dbReference>
<dbReference type="InterPro" id="IPR043129">
    <property type="entry name" value="ATPase_NBD"/>
</dbReference>
<dbReference type="InterPro" id="IPR023945">
    <property type="entry name" value="ManNAc_kinase_bac"/>
</dbReference>
<dbReference type="InterPro" id="IPR000600">
    <property type="entry name" value="ROK"/>
</dbReference>
<dbReference type="InterPro" id="IPR049874">
    <property type="entry name" value="ROK_cs"/>
</dbReference>
<dbReference type="NCBIfam" id="NF047821">
    <property type="entry name" value="NactlManKinNanK"/>
    <property type="match status" value="1"/>
</dbReference>
<dbReference type="NCBIfam" id="NF003461">
    <property type="entry name" value="PRK05082.1"/>
    <property type="match status" value="1"/>
</dbReference>
<dbReference type="PANTHER" id="PTHR18964:SF169">
    <property type="entry name" value="N-ACETYLMANNOSAMINE KINASE"/>
    <property type="match status" value="1"/>
</dbReference>
<dbReference type="PANTHER" id="PTHR18964">
    <property type="entry name" value="ROK (REPRESSOR, ORF, KINASE) FAMILY"/>
    <property type="match status" value="1"/>
</dbReference>
<dbReference type="Pfam" id="PF00480">
    <property type="entry name" value="ROK"/>
    <property type="match status" value="1"/>
</dbReference>
<dbReference type="SUPFAM" id="SSF53067">
    <property type="entry name" value="Actin-like ATPase domain"/>
    <property type="match status" value="1"/>
</dbReference>
<dbReference type="PROSITE" id="PS01125">
    <property type="entry name" value="ROK"/>
    <property type="match status" value="1"/>
</dbReference>
<protein>
    <recommendedName>
        <fullName evidence="1">N-acetylmannosamine kinase</fullName>
        <ecNumber evidence="1">2.7.1.60</ecNumber>
    </recommendedName>
    <alternativeName>
        <fullName evidence="1">ManNAc kinase</fullName>
    </alternativeName>
    <alternativeName>
        <fullName evidence="1">N-acetyl-D-mannosamine kinase</fullName>
    </alternativeName>
</protein>